<feature type="chain" id="PRO_0000364252" description="Eukaryotic translation initiation factor 3 subunit L">
    <location>
        <begin position="1"/>
        <end position="539"/>
    </location>
</feature>
<feature type="domain" description="PCI" evidence="2">
    <location>
        <begin position="306"/>
        <end position="514"/>
    </location>
</feature>
<gene>
    <name type="ORF">GK20774</name>
</gene>
<proteinExistence type="inferred from homology"/>
<protein>
    <recommendedName>
        <fullName evidence="1">Eukaryotic translation initiation factor 3 subunit L</fullName>
        <shortName evidence="1">eIF3l</shortName>
    </recommendedName>
</protein>
<reference key="1">
    <citation type="journal article" date="2007" name="Nature">
        <title>Evolution of genes and genomes on the Drosophila phylogeny.</title>
        <authorList>
            <consortium name="Drosophila 12 genomes consortium"/>
        </authorList>
    </citation>
    <scope>NUCLEOTIDE SEQUENCE [LARGE SCALE GENOMIC DNA]</scope>
    <source>
        <strain>Tucson 14030-0811.24</strain>
    </source>
</reference>
<sequence length="539" mass="63021">MYGGDEFSNNGDFYDDYAHTGDPQLDLEYERSYYTSRMPDNVKYFLMNFCQAIKDGNLYDIQNMYENTFPQISDHHFDKTAWPEEQEVASIVDNEKVFLILYKELYFRHIHARIPGGPKLDQRINSFFNYCDFFNLIISAQNPVMLELPDIWLWELVDEFVYQFQNFAQYRARLTDKSQDEIQQLCVNHSNVWSILCILNVLHSLVDISNIKKQLEVISQGVDPQTVAGDFGKLSFYKMLGYFSLVGLLRVHSLLGDYYQAIKVLEPIEIHKKSAYSHIPACQISTSYYVGFAYMMMRRYADAIRTFSDILLYVQRTKQLYSTRSYQNDQINKQAEQMYHLLAICLVLHPQCIDESIQQVLREKNYHDAMFKMQCGDLDVFKSFFIFACPRFVSPCPPAADAPMEDYVKDPMEHQLLVFMDEVRQQKDLPTTRSYLKLYTTLPLAKLASFIDPNASEDDVSKLLIRLLCFKHKMRNLVWSKGPSGLEGSFKSGSELDFYIDDDMIHIADTKVSHRYGDFFVRKILKFNDLNRKLKGVNI</sequence>
<dbReference type="EMBL" id="CH963876">
    <property type="protein sequence ID" value="EDW76904.1"/>
    <property type="molecule type" value="Genomic_DNA"/>
</dbReference>
<dbReference type="SMR" id="B4MX71"/>
<dbReference type="STRING" id="7260.B4MX71"/>
<dbReference type="EnsemblMetazoa" id="FBtr0251425">
    <property type="protein sequence ID" value="FBpp0249917"/>
    <property type="gene ID" value="FBgn0222770"/>
</dbReference>
<dbReference type="EnsemblMetazoa" id="XM_002065882.4">
    <property type="protein sequence ID" value="XP_002065918.1"/>
    <property type="gene ID" value="LOC6643137"/>
</dbReference>
<dbReference type="GeneID" id="6643137"/>
<dbReference type="KEGG" id="dwi:6643137"/>
<dbReference type="CTD" id="51386"/>
<dbReference type="eggNOG" id="KOG3677">
    <property type="taxonomic scope" value="Eukaryota"/>
</dbReference>
<dbReference type="HOGENOM" id="CLU_029210_0_1_1"/>
<dbReference type="OMA" id="AGWFIRN"/>
<dbReference type="OrthoDB" id="15082at2759"/>
<dbReference type="PhylomeDB" id="B4MX71"/>
<dbReference type="Proteomes" id="UP000007798">
    <property type="component" value="Unassembled WGS sequence"/>
</dbReference>
<dbReference type="GO" id="GO:0016282">
    <property type="term" value="C:eukaryotic 43S preinitiation complex"/>
    <property type="evidence" value="ECO:0007669"/>
    <property type="project" value="UniProtKB-UniRule"/>
</dbReference>
<dbReference type="GO" id="GO:0033290">
    <property type="term" value="C:eukaryotic 48S preinitiation complex"/>
    <property type="evidence" value="ECO:0007669"/>
    <property type="project" value="UniProtKB-UniRule"/>
</dbReference>
<dbReference type="GO" id="GO:0005852">
    <property type="term" value="C:eukaryotic translation initiation factor 3 complex"/>
    <property type="evidence" value="ECO:0007669"/>
    <property type="project" value="UniProtKB-UniRule"/>
</dbReference>
<dbReference type="GO" id="GO:0003743">
    <property type="term" value="F:translation initiation factor activity"/>
    <property type="evidence" value="ECO:0007669"/>
    <property type="project" value="UniProtKB-UniRule"/>
</dbReference>
<dbReference type="GO" id="GO:0001732">
    <property type="term" value="P:formation of cytoplasmic translation initiation complex"/>
    <property type="evidence" value="ECO:0007669"/>
    <property type="project" value="UniProtKB-UniRule"/>
</dbReference>
<dbReference type="HAMAP" id="MF_03011">
    <property type="entry name" value="eIF3l"/>
    <property type="match status" value="1"/>
</dbReference>
<dbReference type="InterPro" id="IPR019382">
    <property type="entry name" value="eIF3l"/>
</dbReference>
<dbReference type="InterPro" id="IPR000717">
    <property type="entry name" value="PCI_dom"/>
</dbReference>
<dbReference type="InterPro" id="IPR011990">
    <property type="entry name" value="TPR-like_helical_dom_sf"/>
</dbReference>
<dbReference type="PANTHER" id="PTHR13242">
    <property type="entry name" value="EUKARYOTIC TRANSLATION INITIATION FACTOR 3"/>
    <property type="match status" value="1"/>
</dbReference>
<dbReference type="PANTHER" id="PTHR13242:SF0">
    <property type="entry name" value="EUKARYOTIC TRANSLATION INITIATION FACTOR 3 SUBUNIT L"/>
    <property type="match status" value="1"/>
</dbReference>
<dbReference type="Pfam" id="PF10255">
    <property type="entry name" value="Paf67"/>
    <property type="match status" value="1"/>
</dbReference>
<dbReference type="SUPFAM" id="SSF48452">
    <property type="entry name" value="TPR-like"/>
    <property type="match status" value="1"/>
</dbReference>
<dbReference type="PROSITE" id="PS50250">
    <property type="entry name" value="PCI"/>
    <property type="match status" value="1"/>
</dbReference>
<accession>B4MX71</accession>
<keyword id="KW-0963">Cytoplasm</keyword>
<keyword id="KW-0396">Initiation factor</keyword>
<keyword id="KW-0648">Protein biosynthesis</keyword>
<keyword id="KW-1185">Reference proteome</keyword>
<evidence type="ECO:0000255" key="1">
    <source>
        <dbReference type="HAMAP-Rule" id="MF_03011"/>
    </source>
</evidence>
<evidence type="ECO:0000255" key="2">
    <source>
        <dbReference type="PROSITE-ProRule" id="PRU01185"/>
    </source>
</evidence>
<organism>
    <name type="scientific">Drosophila willistoni</name>
    <name type="common">Fruit fly</name>
    <dbReference type="NCBI Taxonomy" id="7260"/>
    <lineage>
        <taxon>Eukaryota</taxon>
        <taxon>Metazoa</taxon>
        <taxon>Ecdysozoa</taxon>
        <taxon>Arthropoda</taxon>
        <taxon>Hexapoda</taxon>
        <taxon>Insecta</taxon>
        <taxon>Pterygota</taxon>
        <taxon>Neoptera</taxon>
        <taxon>Endopterygota</taxon>
        <taxon>Diptera</taxon>
        <taxon>Brachycera</taxon>
        <taxon>Muscomorpha</taxon>
        <taxon>Ephydroidea</taxon>
        <taxon>Drosophilidae</taxon>
        <taxon>Drosophila</taxon>
        <taxon>Sophophora</taxon>
    </lineage>
</organism>
<comment type="function">
    <text evidence="1">Component of the eukaryotic translation initiation factor 3 (eIF-3) complex, which is involved in protein synthesis of a specialized repertoire of mRNAs and, together with other initiation factors, stimulates binding of mRNA and methionyl-tRNAi to the 40S ribosome. The eIF-3 complex specifically targets and initiates translation of a subset of mRNAs involved in cell proliferation.</text>
</comment>
<comment type="subunit">
    <text evidence="1">Component of the eukaryotic translation initiation factor 3 (eIF-3) complex. The eIF-3 complex interacts with pix.</text>
</comment>
<comment type="subcellular location">
    <subcellularLocation>
        <location evidence="1">Cytoplasm</location>
    </subcellularLocation>
</comment>
<comment type="similarity">
    <text evidence="1">Belongs to the eIF-3 subunit L family.</text>
</comment>
<name>EIF3L_DROWI</name>